<sequence length="162" mass="19096">MISEEKEYRPCVGIMLFNKQGNIFIGKRFDSDSYWQMPQGGVDEGEELEQAALRELLEEVGTDEAEVVAQNKEWIYYNLPEEVIPICWNGRYSGQKQRWFLMKFCGKDKDININYTDHPEFKEWRWQNVDDLVASAIPFKKEVYKKVIEEFSSIIKGSIYDS</sequence>
<name>RPPH_WOLPP</name>
<reference key="1">
    <citation type="journal article" date="2008" name="Mol. Biol. Evol.">
        <title>Genome evolution of Wolbachia strain wPip from the Culex pipiens group.</title>
        <authorList>
            <person name="Klasson L."/>
            <person name="Walker T."/>
            <person name="Sebaihia M."/>
            <person name="Sanders M.J."/>
            <person name="Quail M.A."/>
            <person name="Lord A."/>
            <person name="Sanders S."/>
            <person name="Earl J."/>
            <person name="O'Neill S.L."/>
            <person name="Thomson N."/>
            <person name="Sinkins S.P."/>
            <person name="Parkhill J."/>
        </authorList>
    </citation>
    <scope>NUCLEOTIDE SEQUENCE [LARGE SCALE GENOMIC DNA]</scope>
    <source>
        <strain>wPip</strain>
    </source>
</reference>
<dbReference type="EC" id="3.6.1.-" evidence="1"/>
<dbReference type="EMBL" id="AM999887">
    <property type="protein sequence ID" value="CAQ54965.1"/>
    <property type="molecule type" value="Genomic_DNA"/>
</dbReference>
<dbReference type="RefSeq" id="WP_007302261.1">
    <property type="nucleotide sequence ID" value="NC_010981.1"/>
</dbReference>
<dbReference type="SMR" id="B3CM46"/>
<dbReference type="KEGG" id="wpi:WP0857"/>
<dbReference type="eggNOG" id="COG0494">
    <property type="taxonomic scope" value="Bacteria"/>
</dbReference>
<dbReference type="HOGENOM" id="CLU_087195_3_0_5"/>
<dbReference type="Proteomes" id="UP000008814">
    <property type="component" value="Chromosome"/>
</dbReference>
<dbReference type="GO" id="GO:0034432">
    <property type="term" value="F:bis(5'-adenosyl)-pentaphosphatase activity"/>
    <property type="evidence" value="ECO:0007669"/>
    <property type="project" value="TreeGrafter"/>
</dbReference>
<dbReference type="GO" id="GO:0008893">
    <property type="term" value="F:guanosine-3',5'-bis(diphosphate) 3'-diphosphatase activity"/>
    <property type="evidence" value="ECO:0007669"/>
    <property type="project" value="TreeGrafter"/>
</dbReference>
<dbReference type="GO" id="GO:0006753">
    <property type="term" value="P:nucleoside phosphate metabolic process"/>
    <property type="evidence" value="ECO:0007669"/>
    <property type="project" value="TreeGrafter"/>
</dbReference>
<dbReference type="GO" id="GO:0019693">
    <property type="term" value="P:ribose phosphate metabolic process"/>
    <property type="evidence" value="ECO:0007669"/>
    <property type="project" value="TreeGrafter"/>
</dbReference>
<dbReference type="CDD" id="cd03671">
    <property type="entry name" value="NUDIX_Ap4A_hydrolase_plant_like"/>
    <property type="match status" value="1"/>
</dbReference>
<dbReference type="Gene3D" id="3.90.79.10">
    <property type="entry name" value="Nucleoside Triphosphate Pyrophosphohydrolase"/>
    <property type="match status" value="1"/>
</dbReference>
<dbReference type="HAMAP" id="MF_00298">
    <property type="entry name" value="Nudix_RppH"/>
    <property type="match status" value="1"/>
</dbReference>
<dbReference type="InterPro" id="IPR020476">
    <property type="entry name" value="Nudix_hydrolase"/>
</dbReference>
<dbReference type="InterPro" id="IPR015797">
    <property type="entry name" value="NUDIX_hydrolase-like_dom_sf"/>
</dbReference>
<dbReference type="InterPro" id="IPR020084">
    <property type="entry name" value="NUDIX_hydrolase_CS"/>
</dbReference>
<dbReference type="InterPro" id="IPR000086">
    <property type="entry name" value="NUDIX_hydrolase_dom"/>
</dbReference>
<dbReference type="InterPro" id="IPR022927">
    <property type="entry name" value="RppH"/>
</dbReference>
<dbReference type="NCBIfam" id="NF001936">
    <property type="entry name" value="PRK00714.1-3"/>
    <property type="match status" value="1"/>
</dbReference>
<dbReference type="NCBIfam" id="NF001937">
    <property type="entry name" value="PRK00714.1-4"/>
    <property type="match status" value="1"/>
</dbReference>
<dbReference type="NCBIfam" id="NF001938">
    <property type="entry name" value="PRK00714.1-5"/>
    <property type="match status" value="1"/>
</dbReference>
<dbReference type="PANTHER" id="PTHR11839:SF22">
    <property type="entry name" value="NUDIX HYDROLASE 26, CHLOROPLASTIC"/>
    <property type="match status" value="1"/>
</dbReference>
<dbReference type="PANTHER" id="PTHR11839">
    <property type="entry name" value="UDP/ADP-SUGAR PYROPHOSPHATASE"/>
    <property type="match status" value="1"/>
</dbReference>
<dbReference type="Pfam" id="PF00293">
    <property type="entry name" value="NUDIX"/>
    <property type="match status" value="1"/>
</dbReference>
<dbReference type="PRINTS" id="PR00502">
    <property type="entry name" value="NUDIXFAMILY"/>
</dbReference>
<dbReference type="SUPFAM" id="SSF55811">
    <property type="entry name" value="Nudix"/>
    <property type="match status" value="1"/>
</dbReference>
<dbReference type="PROSITE" id="PS51462">
    <property type="entry name" value="NUDIX"/>
    <property type="match status" value="1"/>
</dbReference>
<dbReference type="PROSITE" id="PS00893">
    <property type="entry name" value="NUDIX_BOX"/>
    <property type="match status" value="1"/>
</dbReference>
<keyword id="KW-0378">Hydrolase</keyword>
<organism>
    <name type="scientific">Wolbachia pipientis subsp. Culex pipiens (strain wPip)</name>
    <dbReference type="NCBI Taxonomy" id="570417"/>
    <lineage>
        <taxon>Bacteria</taxon>
        <taxon>Pseudomonadati</taxon>
        <taxon>Pseudomonadota</taxon>
        <taxon>Alphaproteobacteria</taxon>
        <taxon>Rickettsiales</taxon>
        <taxon>Anaplasmataceae</taxon>
        <taxon>Wolbachieae</taxon>
        <taxon>Wolbachia</taxon>
    </lineage>
</organism>
<accession>B3CM46</accession>
<gene>
    <name evidence="1" type="primary">rppH</name>
    <name evidence="1" type="synonym">nudH</name>
    <name type="ordered locus">WP0857</name>
</gene>
<comment type="function">
    <text evidence="1">Accelerates the degradation of transcripts by removing pyrophosphate from the 5'-end of triphosphorylated RNA, leading to a more labile monophosphorylated state that can stimulate subsequent ribonuclease cleavage.</text>
</comment>
<comment type="cofactor">
    <cofactor evidence="1">
        <name>a divalent metal cation</name>
        <dbReference type="ChEBI" id="CHEBI:60240"/>
    </cofactor>
</comment>
<comment type="similarity">
    <text evidence="1">Belongs to the Nudix hydrolase family. RppH subfamily.</text>
</comment>
<protein>
    <recommendedName>
        <fullName evidence="1">RNA pyrophosphohydrolase</fullName>
        <ecNumber evidence="1">3.6.1.-</ecNumber>
    </recommendedName>
    <alternativeName>
        <fullName evidence="1">(Di)nucleoside polyphosphate hydrolase</fullName>
    </alternativeName>
</protein>
<feature type="chain" id="PRO_1000115304" description="RNA pyrophosphohydrolase">
    <location>
        <begin position="1"/>
        <end position="162"/>
    </location>
</feature>
<feature type="domain" description="Nudix hydrolase" evidence="1">
    <location>
        <begin position="7"/>
        <end position="149"/>
    </location>
</feature>
<feature type="short sequence motif" description="Nudix box">
    <location>
        <begin position="40"/>
        <end position="61"/>
    </location>
</feature>
<evidence type="ECO:0000255" key="1">
    <source>
        <dbReference type="HAMAP-Rule" id="MF_00298"/>
    </source>
</evidence>
<proteinExistence type="inferred from homology"/>